<protein>
    <recommendedName>
        <fullName evidence="1">GTPase Obg</fullName>
        <ecNumber evidence="1">3.6.5.-</ecNumber>
    </recommendedName>
    <alternativeName>
        <fullName evidence="1">GTP-binding protein Obg</fullName>
    </alternativeName>
</protein>
<name>OBG_FRATT</name>
<comment type="function">
    <text evidence="1">An essential GTPase which binds GTP, GDP and possibly (p)ppGpp with moderate affinity, with high nucleotide exchange rates and a fairly low GTP hydrolysis rate. Plays a role in control of the cell cycle, stress response, ribosome biogenesis and in those bacteria that undergo differentiation, in morphogenesis control.</text>
</comment>
<comment type="cofactor">
    <cofactor evidence="1">
        <name>Mg(2+)</name>
        <dbReference type="ChEBI" id="CHEBI:18420"/>
    </cofactor>
</comment>
<comment type="subunit">
    <text evidence="1">Monomer.</text>
</comment>
<comment type="subcellular location">
    <subcellularLocation>
        <location evidence="1">Cytoplasm</location>
    </subcellularLocation>
</comment>
<comment type="similarity">
    <text evidence="1">Belongs to the TRAFAC class OBG-HflX-like GTPase superfamily. OBG GTPase family.</text>
</comment>
<reference key="1">
    <citation type="journal article" date="2005" name="Nat. Genet.">
        <title>The complete genome sequence of Francisella tularensis, the causative agent of tularemia.</title>
        <authorList>
            <person name="Larsson P."/>
            <person name="Oyston P.C.F."/>
            <person name="Chain P."/>
            <person name="Chu M.C."/>
            <person name="Duffield M."/>
            <person name="Fuxelius H.-H."/>
            <person name="Garcia E."/>
            <person name="Haelltorp G."/>
            <person name="Johansson D."/>
            <person name="Isherwood K.E."/>
            <person name="Karp P.D."/>
            <person name="Larsson E."/>
            <person name="Liu Y."/>
            <person name="Michell S."/>
            <person name="Prior J."/>
            <person name="Prior R."/>
            <person name="Malfatti S."/>
            <person name="Sjoestedt A."/>
            <person name="Svensson K."/>
            <person name="Thompson N."/>
            <person name="Vergez L."/>
            <person name="Wagg J.K."/>
            <person name="Wren B.W."/>
            <person name="Lindler L.E."/>
            <person name="Andersson S.G.E."/>
            <person name="Forsman M."/>
            <person name="Titball R.W."/>
        </authorList>
    </citation>
    <scope>NUCLEOTIDE SEQUENCE [LARGE SCALE GENOMIC DNA]</scope>
    <source>
        <strain>SCHU S4 / Schu 4</strain>
    </source>
</reference>
<sequence length="334" mass="36925">MRFVDEVVIKLQAGKGGNGCVSFRREKYVPRGGPDGGDGGNGGSIYLKADENVNTLIDYRYKREYYAENGRPGEGRNCYGKAGEDLYLVVPVGTSVFDIDTNKKIGEVLQHGQTFKLVSGGKRGIGNTHFKSSTNQAPRKFTLGEEGEYKEVRLELNLLADVALLGLPNAGKSTLIRSVSEATPKVADYPFTTMYPHLGVVKVGVDSFVMADIPGVIEGAAEGAGLGLRFLKHLTRARCVLHVVDICPFNESDPVENYFAVEKELEKYSQELFDKPRFLVINKIDLLADKVEQKCQEFVEQIGYQGNYYTISAAMKKGTDELAKKLNEFLQKQE</sequence>
<accession>Q5NEB0</accession>
<feature type="chain" id="PRO_0000385941" description="GTPase Obg">
    <location>
        <begin position="1"/>
        <end position="334"/>
    </location>
</feature>
<feature type="domain" description="Obg" evidence="2">
    <location>
        <begin position="1"/>
        <end position="159"/>
    </location>
</feature>
<feature type="domain" description="OBG-type G" evidence="1">
    <location>
        <begin position="160"/>
        <end position="331"/>
    </location>
</feature>
<feature type="binding site" evidence="1">
    <location>
        <begin position="166"/>
        <end position="173"/>
    </location>
    <ligand>
        <name>GTP</name>
        <dbReference type="ChEBI" id="CHEBI:37565"/>
    </ligand>
</feature>
<feature type="binding site" evidence="1">
    <location>
        <position position="173"/>
    </location>
    <ligand>
        <name>Mg(2+)</name>
        <dbReference type="ChEBI" id="CHEBI:18420"/>
    </ligand>
</feature>
<feature type="binding site" evidence="1">
    <location>
        <begin position="191"/>
        <end position="195"/>
    </location>
    <ligand>
        <name>GTP</name>
        <dbReference type="ChEBI" id="CHEBI:37565"/>
    </ligand>
</feature>
<feature type="binding site" evidence="1">
    <location>
        <position position="193"/>
    </location>
    <ligand>
        <name>Mg(2+)</name>
        <dbReference type="ChEBI" id="CHEBI:18420"/>
    </ligand>
</feature>
<feature type="binding site" evidence="1">
    <location>
        <begin position="212"/>
        <end position="215"/>
    </location>
    <ligand>
        <name>GTP</name>
        <dbReference type="ChEBI" id="CHEBI:37565"/>
    </ligand>
</feature>
<feature type="binding site" evidence="1">
    <location>
        <begin position="282"/>
        <end position="285"/>
    </location>
    <ligand>
        <name>GTP</name>
        <dbReference type="ChEBI" id="CHEBI:37565"/>
    </ligand>
</feature>
<feature type="binding site" evidence="1">
    <location>
        <begin position="312"/>
        <end position="314"/>
    </location>
    <ligand>
        <name>GTP</name>
        <dbReference type="ChEBI" id="CHEBI:37565"/>
    </ligand>
</feature>
<keyword id="KW-0963">Cytoplasm</keyword>
<keyword id="KW-0342">GTP-binding</keyword>
<keyword id="KW-0378">Hydrolase</keyword>
<keyword id="KW-0460">Magnesium</keyword>
<keyword id="KW-0479">Metal-binding</keyword>
<keyword id="KW-0547">Nucleotide-binding</keyword>
<keyword id="KW-1185">Reference proteome</keyword>
<proteinExistence type="inferred from homology"/>
<gene>
    <name evidence="1" type="primary">obg</name>
    <name type="ordered locus">FTT_1731c</name>
</gene>
<evidence type="ECO:0000255" key="1">
    <source>
        <dbReference type="HAMAP-Rule" id="MF_01454"/>
    </source>
</evidence>
<evidence type="ECO:0000255" key="2">
    <source>
        <dbReference type="PROSITE-ProRule" id="PRU01231"/>
    </source>
</evidence>
<organism>
    <name type="scientific">Francisella tularensis subsp. tularensis (strain SCHU S4 / Schu 4)</name>
    <dbReference type="NCBI Taxonomy" id="177416"/>
    <lineage>
        <taxon>Bacteria</taxon>
        <taxon>Pseudomonadati</taxon>
        <taxon>Pseudomonadota</taxon>
        <taxon>Gammaproteobacteria</taxon>
        <taxon>Thiotrichales</taxon>
        <taxon>Francisellaceae</taxon>
        <taxon>Francisella</taxon>
    </lineage>
</organism>
<dbReference type="EC" id="3.6.5.-" evidence="1"/>
<dbReference type="EMBL" id="AJ749949">
    <property type="protein sequence ID" value="CAG46364.1"/>
    <property type="molecule type" value="Genomic_DNA"/>
</dbReference>
<dbReference type="RefSeq" id="YP_170632.1">
    <property type="nucleotide sequence ID" value="NC_006570.2"/>
</dbReference>
<dbReference type="SMR" id="Q5NEB0"/>
<dbReference type="IntAct" id="Q5NEB0">
    <property type="interactions" value="2"/>
</dbReference>
<dbReference type="STRING" id="177416.FTT_1731c"/>
<dbReference type="DNASU" id="3191931"/>
<dbReference type="EnsemblBacteria" id="CAG46364">
    <property type="protein sequence ID" value="CAG46364"/>
    <property type="gene ID" value="FTT_1731c"/>
</dbReference>
<dbReference type="KEGG" id="ftu:FTT_1731c"/>
<dbReference type="eggNOG" id="COG0536">
    <property type="taxonomic scope" value="Bacteria"/>
</dbReference>
<dbReference type="OrthoDB" id="9807318at2"/>
<dbReference type="Proteomes" id="UP000001174">
    <property type="component" value="Chromosome"/>
</dbReference>
<dbReference type="GO" id="GO:0005737">
    <property type="term" value="C:cytoplasm"/>
    <property type="evidence" value="ECO:0007669"/>
    <property type="project" value="UniProtKB-SubCell"/>
</dbReference>
<dbReference type="GO" id="GO:0005525">
    <property type="term" value="F:GTP binding"/>
    <property type="evidence" value="ECO:0007669"/>
    <property type="project" value="UniProtKB-UniRule"/>
</dbReference>
<dbReference type="GO" id="GO:0003924">
    <property type="term" value="F:GTPase activity"/>
    <property type="evidence" value="ECO:0007669"/>
    <property type="project" value="UniProtKB-UniRule"/>
</dbReference>
<dbReference type="GO" id="GO:0000287">
    <property type="term" value="F:magnesium ion binding"/>
    <property type="evidence" value="ECO:0007669"/>
    <property type="project" value="InterPro"/>
</dbReference>
<dbReference type="GO" id="GO:0042254">
    <property type="term" value="P:ribosome biogenesis"/>
    <property type="evidence" value="ECO:0007669"/>
    <property type="project" value="UniProtKB-UniRule"/>
</dbReference>
<dbReference type="CDD" id="cd01898">
    <property type="entry name" value="Obg"/>
    <property type="match status" value="1"/>
</dbReference>
<dbReference type="FunFam" id="2.70.210.12:FF:000001">
    <property type="entry name" value="GTPase Obg"/>
    <property type="match status" value="1"/>
</dbReference>
<dbReference type="Gene3D" id="2.70.210.12">
    <property type="entry name" value="GTP1/OBG domain"/>
    <property type="match status" value="1"/>
</dbReference>
<dbReference type="Gene3D" id="3.40.50.300">
    <property type="entry name" value="P-loop containing nucleotide triphosphate hydrolases"/>
    <property type="match status" value="1"/>
</dbReference>
<dbReference type="HAMAP" id="MF_01454">
    <property type="entry name" value="GTPase_Obg"/>
    <property type="match status" value="1"/>
</dbReference>
<dbReference type="InterPro" id="IPR031167">
    <property type="entry name" value="G_OBG"/>
</dbReference>
<dbReference type="InterPro" id="IPR006073">
    <property type="entry name" value="GTP-bd"/>
</dbReference>
<dbReference type="InterPro" id="IPR014100">
    <property type="entry name" value="GTP-bd_Obg/CgtA"/>
</dbReference>
<dbReference type="InterPro" id="IPR006074">
    <property type="entry name" value="GTP1-OBG_CS"/>
</dbReference>
<dbReference type="InterPro" id="IPR006169">
    <property type="entry name" value="GTP1_OBG_dom"/>
</dbReference>
<dbReference type="InterPro" id="IPR036726">
    <property type="entry name" value="GTP1_OBG_dom_sf"/>
</dbReference>
<dbReference type="InterPro" id="IPR045086">
    <property type="entry name" value="OBG_GTPase"/>
</dbReference>
<dbReference type="InterPro" id="IPR027417">
    <property type="entry name" value="P-loop_NTPase"/>
</dbReference>
<dbReference type="NCBIfam" id="TIGR02729">
    <property type="entry name" value="Obg_CgtA"/>
    <property type="match status" value="1"/>
</dbReference>
<dbReference type="NCBIfam" id="NF008955">
    <property type="entry name" value="PRK12297.1"/>
    <property type="match status" value="1"/>
</dbReference>
<dbReference type="NCBIfam" id="NF008956">
    <property type="entry name" value="PRK12299.1"/>
    <property type="match status" value="1"/>
</dbReference>
<dbReference type="PANTHER" id="PTHR11702">
    <property type="entry name" value="DEVELOPMENTALLY REGULATED GTP-BINDING PROTEIN-RELATED"/>
    <property type="match status" value="1"/>
</dbReference>
<dbReference type="PANTHER" id="PTHR11702:SF31">
    <property type="entry name" value="MITOCHONDRIAL RIBOSOME-ASSOCIATED GTPASE 2"/>
    <property type="match status" value="1"/>
</dbReference>
<dbReference type="Pfam" id="PF01018">
    <property type="entry name" value="GTP1_OBG"/>
    <property type="match status" value="1"/>
</dbReference>
<dbReference type="Pfam" id="PF01926">
    <property type="entry name" value="MMR_HSR1"/>
    <property type="match status" value="1"/>
</dbReference>
<dbReference type="PIRSF" id="PIRSF002401">
    <property type="entry name" value="GTP_bd_Obg/CgtA"/>
    <property type="match status" value="1"/>
</dbReference>
<dbReference type="PRINTS" id="PR00326">
    <property type="entry name" value="GTP1OBG"/>
</dbReference>
<dbReference type="SUPFAM" id="SSF82051">
    <property type="entry name" value="Obg GTP-binding protein N-terminal domain"/>
    <property type="match status" value="1"/>
</dbReference>
<dbReference type="SUPFAM" id="SSF52540">
    <property type="entry name" value="P-loop containing nucleoside triphosphate hydrolases"/>
    <property type="match status" value="1"/>
</dbReference>
<dbReference type="PROSITE" id="PS51710">
    <property type="entry name" value="G_OBG"/>
    <property type="match status" value="1"/>
</dbReference>
<dbReference type="PROSITE" id="PS00905">
    <property type="entry name" value="GTP1_OBG"/>
    <property type="match status" value="1"/>
</dbReference>
<dbReference type="PROSITE" id="PS51883">
    <property type="entry name" value="OBG"/>
    <property type="match status" value="1"/>
</dbReference>